<accession>B5XLN3</accession>
<comment type="function">
    <text evidence="1">Site-specific tyrosine recombinase, which acts by catalyzing the cutting and rejoining of the recombining DNA molecules. Essential to convert dimers of the bacterial chromosome into monomers to permit their segregation at cell division.</text>
</comment>
<comment type="activity regulation">
    <text evidence="1">FtsK is required for recombination.</text>
</comment>
<comment type="subcellular location">
    <subcellularLocation>
        <location evidence="1">Cytoplasm</location>
    </subcellularLocation>
</comment>
<comment type="similarity">
    <text evidence="1">Belongs to the 'phage' integrase family. XerS subfamily.</text>
</comment>
<sequence length="356" mass="41541">MRRELLLEKIETYKAIMPWYVLDYYQSQLAVPYRFTTLYEYLKEYKRFFDWLMDADLTQAPKIADIDLSTLEHLTKKDLEAFVLYLRERPSLNTYSTKEGLSQTTINRTLSALSSLYKYLTEEVENDQGEPYFYRNVMKKVSTKKKKETLASRAENIKQKLFLGDETLAFLDYVDKEYEQKLSNRAKSSFRKNKERDLAIIALLLASGVRLSEAVNLDLKDVNLNMMIIEVIRKGGKRDSVNVAGFAKGYLESYLAVRQRRYKAEKQDLAFFLTEYRGVPNRMDASSIEKMVGKYSEDFKIRVTPHKLRHTLATRLYDATKSQVLVSHQLGHSSTQVTDLYTHIVNDEQKNALDNL</sequence>
<keyword id="KW-0131">Cell cycle</keyword>
<keyword id="KW-0132">Cell division</keyword>
<keyword id="KW-0159">Chromosome partition</keyword>
<keyword id="KW-0963">Cytoplasm</keyword>
<keyword id="KW-0229">DNA integration</keyword>
<keyword id="KW-0233">DNA recombination</keyword>
<keyword id="KW-0238">DNA-binding</keyword>
<feature type="chain" id="PRO_1000187916" description="Tyrosine recombinase XerS">
    <location>
        <begin position="1"/>
        <end position="356"/>
    </location>
</feature>
<feature type="domain" description="Core-binding (CB)" evidence="3">
    <location>
        <begin position="16"/>
        <end position="121"/>
    </location>
</feature>
<feature type="domain" description="Tyr recombinase" evidence="2">
    <location>
        <begin position="169"/>
        <end position="354"/>
    </location>
</feature>
<feature type="active site" evidence="1">
    <location>
        <position position="210"/>
    </location>
</feature>
<feature type="active site" evidence="1">
    <location>
        <position position="234"/>
    </location>
</feature>
<feature type="active site" evidence="1">
    <location>
        <position position="306"/>
    </location>
</feature>
<feature type="active site" evidence="1">
    <location>
        <position position="309"/>
    </location>
</feature>
<feature type="active site" evidence="1">
    <location>
        <position position="332"/>
    </location>
</feature>
<feature type="active site" description="O-(3'-phospho-DNA)-tyrosine intermediate" evidence="1">
    <location>
        <position position="341"/>
    </location>
</feature>
<name>XERS_STRPZ</name>
<dbReference type="EMBL" id="CP000829">
    <property type="protein sequence ID" value="ACI61245.1"/>
    <property type="molecule type" value="Genomic_DNA"/>
</dbReference>
<dbReference type="SMR" id="B5XLN3"/>
<dbReference type="KEGG" id="soz:Spy49_0943c"/>
<dbReference type="HOGENOM" id="CLU_027562_9_6_9"/>
<dbReference type="Proteomes" id="UP000001039">
    <property type="component" value="Chromosome"/>
</dbReference>
<dbReference type="GO" id="GO:0005737">
    <property type="term" value="C:cytoplasm"/>
    <property type="evidence" value="ECO:0007669"/>
    <property type="project" value="UniProtKB-SubCell"/>
</dbReference>
<dbReference type="GO" id="GO:0003677">
    <property type="term" value="F:DNA binding"/>
    <property type="evidence" value="ECO:0007669"/>
    <property type="project" value="UniProtKB-KW"/>
</dbReference>
<dbReference type="GO" id="GO:0009037">
    <property type="term" value="F:tyrosine-based site-specific recombinase activity"/>
    <property type="evidence" value="ECO:0007669"/>
    <property type="project" value="UniProtKB-UniRule"/>
</dbReference>
<dbReference type="GO" id="GO:0051301">
    <property type="term" value="P:cell division"/>
    <property type="evidence" value="ECO:0007669"/>
    <property type="project" value="UniProtKB-KW"/>
</dbReference>
<dbReference type="GO" id="GO:0007059">
    <property type="term" value="P:chromosome segregation"/>
    <property type="evidence" value="ECO:0007669"/>
    <property type="project" value="UniProtKB-UniRule"/>
</dbReference>
<dbReference type="GO" id="GO:0006310">
    <property type="term" value="P:DNA recombination"/>
    <property type="evidence" value="ECO:0007669"/>
    <property type="project" value="UniProtKB-UniRule"/>
</dbReference>
<dbReference type="CDD" id="cd00397">
    <property type="entry name" value="DNA_BRE_C"/>
    <property type="match status" value="1"/>
</dbReference>
<dbReference type="Gene3D" id="1.10.150.130">
    <property type="match status" value="1"/>
</dbReference>
<dbReference type="Gene3D" id="1.10.443.10">
    <property type="entry name" value="Intergrase catalytic core"/>
    <property type="match status" value="1"/>
</dbReference>
<dbReference type="HAMAP" id="MF_01816">
    <property type="entry name" value="Recomb_XerS"/>
    <property type="match status" value="1"/>
</dbReference>
<dbReference type="InterPro" id="IPR044068">
    <property type="entry name" value="CB"/>
</dbReference>
<dbReference type="InterPro" id="IPR011010">
    <property type="entry name" value="DNA_brk_join_enz"/>
</dbReference>
<dbReference type="InterPro" id="IPR013762">
    <property type="entry name" value="Integrase-like_cat_sf"/>
</dbReference>
<dbReference type="InterPro" id="IPR002104">
    <property type="entry name" value="Integrase_catalytic"/>
</dbReference>
<dbReference type="InterPro" id="IPR010998">
    <property type="entry name" value="Integrase_recombinase_N"/>
</dbReference>
<dbReference type="InterPro" id="IPR004107">
    <property type="entry name" value="Integrase_SAM-like_N"/>
</dbReference>
<dbReference type="InterPro" id="IPR023670">
    <property type="entry name" value="Recomb_XerS"/>
</dbReference>
<dbReference type="InterPro" id="IPR050090">
    <property type="entry name" value="Tyrosine_recombinase_XerCD"/>
</dbReference>
<dbReference type="NCBIfam" id="NF003462">
    <property type="entry name" value="PRK05084.1"/>
    <property type="match status" value="1"/>
</dbReference>
<dbReference type="PANTHER" id="PTHR30349">
    <property type="entry name" value="PHAGE INTEGRASE-RELATED"/>
    <property type="match status" value="1"/>
</dbReference>
<dbReference type="PANTHER" id="PTHR30349:SF77">
    <property type="entry name" value="TYROSINE RECOMBINASE XERC"/>
    <property type="match status" value="1"/>
</dbReference>
<dbReference type="Pfam" id="PF02899">
    <property type="entry name" value="Phage_int_SAM_1"/>
    <property type="match status" value="1"/>
</dbReference>
<dbReference type="Pfam" id="PF00589">
    <property type="entry name" value="Phage_integrase"/>
    <property type="match status" value="1"/>
</dbReference>
<dbReference type="SUPFAM" id="SSF56349">
    <property type="entry name" value="DNA breaking-rejoining enzymes"/>
    <property type="match status" value="1"/>
</dbReference>
<dbReference type="PROSITE" id="PS51900">
    <property type="entry name" value="CB"/>
    <property type="match status" value="1"/>
</dbReference>
<dbReference type="PROSITE" id="PS51898">
    <property type="entry name" value="TYR_RECOMBINASE"/>
    <property type="match status" value="1"/>
</dbReference>
<reference key="1">
    <citation type="journal article" date="2008" name="J. Bacteriol.">
        <title>Genome sequence of a nephritogenic and highly transformable M49 strain of Streptococcus pyogenes.</title>
        <authorList>
            <person name="McShan W.M."/>
            <person name="Ferretti J.J."/>
            <person name="Karasawa T."/>
            <person name="Suvorov A.N."/>
            <person name="Lin S."/>
            <person name="Qin B."/>
            <person name="Jia H."/>
            <person name="Kenton S."/>
            <person name="Najar F."/>
            <person name="Wu H."/>
            <person name="Scott J."/>
            <person name="Roe B.A."/>
            <person name="Savic D.J."/>
        </authorList>
    </citation>
    <scope>NUCLEOTIDE SEQUENCE [LARGE SCALE GENOMIC DNA]</scope>
    <source>
        <strain>NZ131</strain>
    </source>
</reference>
<evidence type="ECO:0000255" key="1">
    <source>
        <dbReference type="HAMAP-Rule" id="MF_01816"/>
    </source>
</evidence>
<evidence type="ECO:0000255" key="2">
    <source>
        <dbReference type="PROSITE-ProRule" id="PRU01246"/>
    </source>
</evidence>
<evidence type="ECO:0000255" key="3">
    <source>
        <dbReference type="PROSITE-ProRule" id="PRU01248"/>
    </source>
</evidence>
<protein>
    <recommendedName>
        <fullName evidence="1">Tyrosine recombinase XerS</fullName>
    </recommendedName>
</protein>
<proteinExistence type="inferred from homology"/>
<gene>
    <name evidence="1" type="primary">xerS</name>
    <name type="ordered locus">Spy49_0943c</name>
</gene>
<organism>
    <name type="scientific">Streptococcus pyogenes serotype M49 (strain NZ131)</name>
    <dbReference type="NCBI Taxonomy" id="471876"/>
    <lineage>
        <taxon>Bacteria</taxon>
        <taxon>Bacillati</taxon>
        <taxon>Bacillota</taxon>
        <taxon>Bacilli</taxon>
        <taxon>Lactobacillales</taxon>
        <taxon>Streptococcaceae</taxon>
        <taxon>Streptococcus</taxon>
    </lineage>
</organism>